<proteinExistence type="evidence at protein level"/>
<keyword id="KW-0002">3D-structure</keyword>
<keyword id="KW-0963">Cytoplasm</keyword>
<keyword id="KW-1017">Isopeptide bond</keyword>
<keyword id="KW-0479">Metal-binding</keyword>
<keyword id="KW-0539">Nucleus</keyword>
<keyword id="KW-1185">Reference proteome</keyword>
<keyword id="KW-0687">Ribonucleoprotein</keyword>
<keyword id="KW-0689">Ribosomal protein</keyword>
<keyword id="KW-0832">Ubl conjugation</keyword>
<keyword id="KW-0862">Zinc</keyword>
<keyword id="KW-0863">Zinc-finger</keyword>
<dbReference type="EMBL" id="X15338">
    <property type="protein sequence ID" value="CAA33390.1"/>
    <property type="molecule type" value="mRNA"/>
</dbReference>
<dbReference type="EMBL" id="U01221">
    <property type="protein sequence ID" value="AAA03351.1"/>
    <property type="molecule type" value="mRNA"/>
</dbReference>
<dbReference type="EMBL" id="U01220">
    <property type="protein sequence ID" value="AAA56880.1"/>
    <property type="molecule type" value="Genomic_DNA"/>
</dbReference>
<dbReference type="EMBL" id="CM002242">
    <property type="protein sequence ID" value="ESA41890.1"/>
    <property type="molecule type" value="Genomic_DNA"/>
</dbReference>
<dbReference type="EMBL" id="CM002242">
    <property type="protein sequence ID" value="ESA41891.1"/>
    <property type="molecule type" value="Genomic_DNA"/>
</dbReference>
<dbReference type="PIR" id="PQ0201">
    <property type="entry name" value="UQNCR"/>
</dbReference>
<dbReference type="PIR" id="T46664">
    <property type="entry name" value="T46664"/>
</dbReference>
<dbReference type="RefSeq" id="XP_011395193.1">
    <property type="nucleotide sequence ID" value="XM_011396891.1"/>
</dbReference>
<dbReference type="RefSeq" id="XP_011395194.1">
    <property type="nucleotide sequence ID" value="XM_011396892.1"/>
</dbReference>
<dbReference type="PDB" id="7R81">
    <property type="method" value="EM"/>
    <property type="resolution" value="2.70 A"/>
    <property type="chains" value="g2=1-154"/>
</dbReference>
<dbReference type="PDBsum" id="7R81"/>
<dbReference type="EMDB" id="EMD-24307"/>
<dbReference type="SMR" id="P14799"/>
<dbReference type="FunCoup" id="P14799">
    <property type="interactions" value="1043"/>
</dbReference>
<dbReference type="STRING" id="367110.P14799"/>
<dbReference type="PaxDb" id="5141-EFNCRP00000005481"/>
<dbReference type="EnsemblFungi" id="ESA41890">
    <property type="protein sequence ID" value="ESA41890"/>
    <property type="gene ID" value="NCU04553"/>
</dbReference>
<dbReference type="EnsemblFungi" id="ESA41891">
    <property type="protein sequence ID" value="ESA41891"/>
    <property type="gene ID" value="NCU04553"/>
</dbReference>
<dbReference type="GeneID" id="3872092"/>
<dbReference type="KEGG" id="ncr:NCU04553"/>
<dbReference type="VEuPathDB" id="FungiDB:NCU04553"/>
<dbReference type="HOGENOM" id="CLU_010412_2_0_1"/>
<dbReference type="InParanoid" id="P14799"/>
<dbReference type="OMA" id="GVFMAFH"/>
<dbReference type="OrthoDB" id="428577at2759"/>
<dbReference type="Proteomes" id="UP000001805">
    <property type="component" value="Chromosome 7, Linkage Group VII"/>
</dbReference>
<dbReference type="GO" id="GO:0005737">
    <property type="term" value="C:cytoplasm"/>
    <property type="evidence" value="ECO:0000318"/>
    <property type="project" value="GO_Central"/>
</dbReference>
<dbReference type="GO" id="GO:0005634">
    <property type="term" value="C:nucleus"/>
    <property type="evidence" value="ECO:0000318"/>
    <property type="project" value="GO_Central"/>
</dbReference>
<dbReference type="GO" id="GO:1990904">
    <property type="term" value="C:ribonucleoprotein complex"/>
    <property type="evidence" value="ECO:0007669"/>
    <property type="project" value="UniProtKB-KW"/>
</dbReference>
<dbReference type="GO" id="GO:0005840">
    <property type="term" value="C:ribosome"/>
    <property type="evidence" value="ECO:0007669"/>
    <property type="project" value="UniProtKB-KW"/>
</dbReference>
<dbReference type="GO" id="GO:0031386">
    <property type="term" value="F:protein tag activity"/>
    <property type="evidence" value="ECO:0000318"/>
    <property type="project" value="GO_Central"/>
</dbReference>
<dbReference type="GO" id="GO:0003735">
    <property type="term" value="F:structural constituent of ribosome"/>
    <property type="evidence" value="ECO:0007669"/>
    <property type="project" value="InterPro"/>
</dbReference>
<dbReference type="GO" id="GO:0031625">
    <property type="term" value="F:ubiquitin protein ligase binding"/>
    <property type="evidence" value="ECO:0000318"/>
    <property type="project" value="GO_Central"/>
</dbReference>
<dbReference type="GO" id="GO:0008270">
    <property type="term" value="F:zinc ion binding"/>
    <property type="evidence" value="ECO:0007669"/>
    <property type="project" value="UniProtKB-KW"/>
</dbReference>
<dbReference type="GO" id="GO:0019941">
    <property type="term" value="P:modification-dependent protein catabolic process"/>
    <property type="evidence" value="ECO:0000318"/>
    <property type="project" value="GO_Central"/>
</dbReference>
<dbReference type="GO" id="GO:0016567">
    <property type="term" value="P:protein ubiquitination"/>
    <property type="evidence" value="ECO:0000318"/>
    <property type="project" value="GO_Central"/>
</dbReference>
<dbReference type="GO" id="GO:0006412">
    <property type="term" value="P:translation"/>
    <property type="evidence" value="ECO:0007669"/>
    <property type="project" value="InterPro"/>
</dbReference>
<dbReference type="CDD" id="cd01803">
    <property type="entry name" value="Ubl_ubiquitin"/>
    <property type="match status" value="1"/>
</dbReference>
<dbReference type="FunFam" id="3.10.20.90:FF:000008">
    <property type="entry name" value="Ubiquitin-40S ribosomal protein S27a"/>
    <property type="match status" value="1"/>
</dbReference>
<dbReference type="Gene3D" id="6.20.50.150">
    <property type="match status" value="1"/>
</dbReference>
<dbReference type="Gene3D" id="3.10.20.90">
    <property type="entry name" value="Phosphatidylinositol 3-kinase Catalytic Subunit, Chain A, domain 1"/>
    <property type="match status" value="1"/>
</dbReference>
<dbReference type="InterPro" id="IPR002906">
    <property type="entry name" value="Ribosomal_eS31"/>
</dbReference>
<dbReference type="InterPro" id="IPR038582">
    <property type="entry name" value="Ribosomal_eS31_euk-type_sf"/>
</dbReference>
<dbReference type="InterPro" id="IPR011332">
    <property type="entry name" value="Ribosomal_zn-bd"/>
</dbReference>
<dbReference type="InterPro" id="IPR000626">
    <property type="entry name" value="Ubiquitin-like_dom"/>
</dbReference>
<dbReference type="InterPro" id="IPR029071">
    <property type="entry name" value="Ubiquitin-like_domsf"/>
</dbReference>
<dbReference type="InterPro" id="IPR019954">
    <property type="entry name" value="Ubiquitin_CS"/>
</dbReference>
<dbReference type="InterPro" id="IPR019956">
    <property type="entry name" value="Ubiquitin_dom"/>
</dbReference>
<dbReference type="InterPro" id="IPR050158">
    <property type="entry name" value="Ubiquitin_ubiquitin-like"/>
</dbReference>
<dbReference type="PANTHER" id="PTHR10666">
    <property type="entry name" value="UBIQUITIN"/>
    <property type="match status" value="1"/>
</dbReference>
<dbReference type="Pfam" id="PF01599">
    <property type="entry name" value="Ribosomal_S27"/>
    <property type="match status" value="1"/>
</dbReference>
<dbReference type="Pfam" id="PF00240">
    <property type="entry name" value="ubiquitin"/>
    <property type="match status" value="1"/>
</dbReference>
<dbReference type="PRINTS" id="PR00348">
    <property type="entry name" value="UBIQUITIN"/>
</dbReference>
<dbReference type="SMART" id="SM01402">
    <property type="entry name" value="Ribosomal_S27"/>
    <property type="match status" value="1"/>
</dbReference>
<dbReference type="SMART" id="SM00213">
    <property type="entry name" value="UBQ"/>
    <property type="match status" value="1"/>
</dbReference>
<dbReference type="SUPFAM" id="SSF54236">
    <property type="entry name" value="Ubiquitin-like"/>
    <property type="match status" value="1"/>
</dbReference>
<dbReference type="SUPFAM" id="SSF57829">
    <property type="entry name" value="Zn-binding ribosomal proteins"/>
    <property type="match status" value="1"/>
</dbReference>
<dbReference type="PROSITE" id="PS00299">
    <property type="entry name" value="UBIQUITIN_1"/>
    <property type="match status" value="1"/>
</dbReference>
<dbReference type="PROSITE" id="PS50053">
    <property type="entry name" value="UBIQUITIN_2"/>
    <property type="match status" value="1"/>
</dbReference>
<sequence>MQIFVKTLTGKTITLEVESSDTIDNVKQKIQDKEGIPPDQQRLIFAGKQLEDGRTLSDYNIQKESTLHLVLRLRGGGKKRKKKVYTTPKKIKHKRKKTKLAVLKYYKVDSDGKIERLRRECPNETCGAGVFMAAMQDRQYCGRCHLTYVFEKSS</sequence>
<gene>
    <name type="primary">ubi::crp-6</name>
    <name type="synonym">ubi-3</name>
    <name type="ORF">NCU04553</name>
</gene>
<accession>P14799</accession>
<accession>P13117</accession>
<accession>Q7RVR9</accession>
<accession>Q7RVX5</accession>
<accession>Q7RWD8</accession>
<accession>V5IMD6</accession>
<reference key="1">
    <citation type="journal article" date="1991" name="Gene">
        <title>The cDNA sequence and expression of an ubiquitin-tail gene fusion in Neurospora crassa.</title>
        <authorList>
            <person name="Taccioli G.E."/>
            <person name="Grotewold E."/>
            <person name="Aisemberg G.O."/>
            <person name="Judewicz D.N."/>
        </authorList>
    </citation>
    <scope>NUCLEOTIDE SEQUENCE [MRNA]</scope>
    <source>
        <strain>74-ORS-6a / FGSC 4200</strain>
    </source>
</reference>
<reference key="2">
    <citation type="journal article" date="1994" name="Gene">
        <title>The isolation and characterization of a Neurospora crassa gene (ubi::crp-6) encoding a ubiquitin-40S ribosomal protein fusion protein.</title>
        <authorList>
            <person name="Tarawneh K.A."/>
            <person name="Anumula K.R."/>
            <person name="Free S.J."/>
        </authorList>
    </citation>
    <scope>NUCLEOTIDE SEQUENCE [GENOMIC DNA / MRNA]</scope>
    <source>
        <strain>ATCC 24698 / 74-OR23-1A / CBS 708.71 / DSM 1257 / FGSC 987</strain>
    </source>
</reference>
<reference key="3">
    <citation type="journal article" date="2003" name="Nature">
        <title>The genome sequence of the filamentous fungus Neurospora crassa.</title>
        <authorList>
            <person name="Galagan J.E."/>
            <person name="Calvo S.E."/>
            <person name="Borkovich K.A."/>
            <person name="Selker E.U."/>
            <person name="Read N.D."/>
            <person name="Jaffe D.B."/>
            <person name="FitzHugh W."/>
            <person name="Ma L.-J."/>
            <person name="Smirnov S."/>
            <person name="Purcell S."/>
            <person name="Rehman B."/>
            <person name="Elkins T."/>
            <person name="Engels R."/>
            <person name="Wang S."/>
            <person name="Nielsen C.B."/>
            <person name="Butler J."/>
            <person name="Endrizzi M."/>
            <person name="Qui D."/>
            <person name="Ianakiev P."/>
            <person name="Bell-Pedersen D."/>
            <person name="Nelson M.A."/>
            <person name="Werner-Washburne M."/>
            <person name="Selitrennikoff C.P."/>
            <person name="Kinsey J.A."/>
            <person name="Braun E.L."/>
            <person name="Zelter A."/>
            <person name="Schulte U."/>
            <person name="Kothe G.O."/>
            <person name="Jedd G."/>
            <person name="Mewes H.-W."/>
            <person name="Staben C."/>
            <person name="Marcotte E."/>
            <person name="Greenberg D."/>
            <person name="Roy A."/>
            <person name="Foley K."/>
            <person name="Naylor J."/>
            <person name="Stange-Thomann N."/>
            <person name="Barrett R."/>
            <person name="Gnerre S."/>
            <person name="Kamal M."/>
            <person name="Kamvysselis M."/>
            <person name="Mauceli E.W."/>
            <person name="Bielke C."/>
            <person name="Rudd S."/>
            <person name="Frishman D."/>
            <person name="Krystofova S."/>
            <person name="Rasmussen C."/>
            <person name="Metzenberg R.L."/>
            <person name="Perkins D.D."/>
            <person name="Kroken S."/>
            <person name="Cogoni C."/>
            <person name="Macino G."/>
            <person name="Catcheside D.E.A."/>
            <person name="Li W."/>
            <person name="Pratt R.J."/>
            <person name="Osmani S.A."/>
            <person name="DeSouza C.P.C."/>
            <person name="Glass N.L."/>
            <person name="Orbach M.J."/>
            <person name="Berglund J.A."/>
            <person name="Voelker R."/>
            <person name="Yarden O."/>
            <person name="Plamann M."/>
            <person name="Seiler S."/>
            <person name="Dunlap J.C."/>
            <person name="Radford A."/>
            <person name="Aramayo R."/>
            <person name="Natvig D.O."/>
            <person name="Alex L.A."/>
            <person name="Mannhaupt G."/>
            <person name="Ebbole D.J."/>
            <person name="Freitag M."/>
            <person name="Paulsen I."/>
            <person name="Sachs M.S."/>
            <person name="Lander E.S."/>
            <person name="Nusbaum C."/>
            <person name="Birren B.W."/>
        </authorList>
    </citation>
    <scope>NUCLEOTIDE SEQUENCE [LARGE SCALE GENOMIC DNA]</scope>
    <source>
        <strain>ATCC 24698 / 74-OR23-1A / CBS 708.71 / DSM 1257 / FGSC 987</strain>
    </source>
</reference>
<reference evidence="7" key="4">
    <citation type="journal article" date="2021" name="Proc. Natl. Acad. Sci. U.S.A.">
        <title>Structure of the translating Neurospora ribosome arrested by cycloheximide.</title>
        <authorList>
            <person name="Shen L."/>
            <person name="Su Z."/>
            <person name="Yang K."/>
            <person name="Wu C."/>
            <person name="Becker T."/>
            <person name="Bell-Pedersen D."/>
            <person name="Zhang J."/>
            <person name="Sachs M.S."/>
        </authorList>
    </citation>
    <scope>STRUCTURE BY ELECTRON MICROSCOPY (2.70 ANGSTROMS)</scope>
</reference>
<organism>
    <name type="scientific">Neurospora crassa (strain ATCC 24698 / 74-OR23-1A / CBS 708.71 / DSM 1257 / FGSC 987)</name>
    <dbReference type="NCBI Taxonomy" id="367110"/>
    <lineage>
        <taxon>Eukaryota</taxon>
        <taxon>Fungi</taxon>
        <taxon>Dikarya</taxon>
        <taxon>Ascomycota</taxon>
        <taxon>Pezizomycotina</taxon>
        <taxon>Sordariomycetes</taxon>
        <taxon>Sordariomycetidae</taxon>
        <taxon>Sordariales</taxon>
        <taxon>Sordariaceae</taxon>
        <taxon>Neurospora</taxon>
    </lineage>
</organism>
<name>RS27A_NEUCR</name>
<protein>
    <recommendedName>
        <fullName evidence="5">Ubiquitin-ribosomal protein eS31 fusion protein</fullName>
    </recommendedName>
    <component>
        <recommendedName>
            <fullName>Ubiquitin</fullName>
        </recommendedName>
    </component>
    <component>
        <recommendedName>
            <fullName evidence="4">Small ribosomal subunit protein eS31</fullName>
        </recommendedName>
        <alternativeName>
            <fullName>40S ribosomal protein S27a</fullName>
        </alternativeName>
        <alternativeName>
            <fullName>Cytoplasmic ribosomal protein 6</fullName>
            <shortName>CRP6</shortName>
        </alternativeName>
        <alternativeName>
            <fullName>S37</fullName>
        </alternativeName>
    </component>
</protein>
<comment type="function">
    <molecule>Ubiquitin</molecule>
    <text evidence="1">Exists either covalently attached to another protein, or free (unanchored). When covalently bound, it is conjugated to target proteins via an isopeptide bond either as a monomer (monoubiquitin), a polymer linked via different Lys residues of the ubiquitin (polyubiquitin chains) or a linear polymer linked via the initiator Met of the ubiquitin (linear polyubiquitin chains). Polyubiquitin chains, when attached to a target protein, have different functions depending on the Lys residue of the ubiquitin that is linked: Lys-6-linked may be involved in DNA repair; Lys-11-linked is involved in ERAD (endoplasmic reticulum-associated degradation) and in cell-cycle regulation; Lys-29-linked is involved in lysosomal degradation; Lys-33-linked is involved in kinase modification; Lys-48-linked is involved in protein degradation via the proteasome; Lys-63-linked is involved in endocytosis, and DNA-damage responses. Linear polymer chains formed via attachment by the initiator Met lead to cell signaling. Ubiquitin is usually conjugated to Lys residues of target proteins, however, in rare cases, conjugation to Cys or Ser residues has been observed. When polyubiquitin is free (unanchored-polyubiquitin), it also has distinct roles, such as in activation of protein kinases, and in signaling (By similarity).</text>
</comment>
<comment type="function">
    <molecule>Small ribosomal subunit protein eS31</molecule>
    <text evidence="6">Component of the ribosome, a large ribonucleoprotein complex responsible for the synthesis of proteins in the cell. The small ribosomal subunit (SSU) binds messenger RNAs (mRNAs) and translates the encoded message by selecting cognate aminoacyl-transfer RNA (tRNA) molecules. The large subunit (LSU) contains the ribosomal catalytic site termed the peptidyl transferase center (PTC), which catalyzes the formation of peptide bonds, thereby polymerizing the amino acids delivered by tRNAs into a polypeptide chain. The nascent polypeptides leave the ribosome through a tunnel in the LSU and interact with protein factors that function in enzymatic processing, targeting, and the membrane insertion of nascent chains at the exit of the ribosomal tunnel.</text>
</comment>
<comment type="subunit">
    <molecule>Small ribosomal subunit protein eS31</molecule>
    <text evidence="3">Component of the small ribosomal subunit (SSU). Mature N.crassa ribosomes consist of a small (40S) and a large (60S) subunit. The 40S small subunit contains 1 molecule of ribosomal RNA (18S rRNA) and at least 32 different proteins. The large 60S subunit contains 3 rRNA molecules (26S, 5.8S and 5S rRNA) and at least 42 different proteins.</text>
</comment>
<comment type="subcellular location">
    <molecule>Ubiquitin</molecule>
    <subcellularLocation>
        <location evidence="1">Cytoplasm</location>
    </subcellularLocation>
    <subcellularLocation>
        <location evidence="1">Nucleus</location>
    </subcellularLocation>
</comment>
<comment type="subcellular location">
    <molecule>Small ribosomal subunit protein eS31</molecule>
    <subcellularLocation>
        <location evidence="3">Cytoplasm</location>
    </subcellularLocation>
</comment>
<comment type="miscellaneous">
    <text evidence="5">Ubiquitin is encoded by 3 different genes. Crp-79 is synthesized as a polyprotein with one copy of ubiquitin fused to ribosomal protein eL40. Crp-6/ubi-3 is a polyprotein with one copy of ubiquitin fused to ribosomal protein eS31. Ubi is a polyprotein containing 4 exact head to tail repeats of ubiquitin.</text>
</comment>
<comment type="similarity">
    <text evidence="5">In the N-terminal section; belongs to the ubiquitin family.</text>
</comment>
<comment type="similarity">
    <text evidence="5">In the C-terminal section; belongs to the eukaryotic ribosomal protein eS31 family.</text>
</comment>
<evidence type="ECO:0000250" key="1"/>
<evidence type="ECO:0000255" key="2">
    <source>
        <dbReference type="PROSITE-ProRule" id="PRU00214"/>
    </source>
</evidence>
<evidence type="ECO:0000269" key="3">
    <source>
    </source>
</evidence>
<evidence type="ECO:0000303" key="4">
    <source>
    </source>
</evidence>
<evidence type="ECO:0000305" key="5"/>
<evidence type="ECO:0000305" key="6">
    <source>
    </source>
</evidence>
<evidence type="ECO:0007744" key="7">
    <source>
        <dbReference type="PDB" id="7R81"/>
    </source>
</evidence>
<feature type="chain" id="PRO_0000396485" description="Ubiquitin">
    <location>
        <begin position="1"/>
        <end position="76"/>
    </location>
</feature>
<feature type="chain" id="PRO_0000137686" description="Small ribosomal subunit protein eS31">
    <location>
        <begin position="77"/>
        <end position="154"/>
    </location>
</feature>
<feature type="domain" description="Ubiquitin-like" evidence="2">
    <location>
        <begin position="1"/>
        <end position="76"/>
    </location>
</feature>
<feature type="zinc finger region" description="C4-type">
    <location>
        <begin position="121"/>
        <end position="144"/>
    </location>
</feature>
<feature type="cross-link" description="Glycyl lysine isopeptide (Lys-Gly) (interchain with G-Cter in ubiquitin)">
    <location>
        <position position="6"/>
    </location>
</feature>
<feature type="cross-link" description="Glycyl lysine isopeptide (Lys-Gly) (interchain with G-Cter in ubiquitin)">
    <location>
        <position position="11"/>
    </location>
</feature>
<feature type="cross-link" description="Glycyl lysine isopeptide (Lys-Gly) (interchain with G-Cter in ubiquitin)">
    <location>
        <position position="27"/>
    </location>
</feature>
<feature type="cross-link" description="Glycyl lysine isopeptide (Lys-Gly) (interchain with G-Cter in ubiquitin)">
    <location>
        <position position="29"/>
    </location>
</feature>
<feature type="cross-link" description="Glycyl lysine isopeptide (Lys-Gly) (interchain with G-Cter in ubiquitin)">
    <location>
        <position position="33"/>
    </location>
</feature>
<feature type="cross-link" description="Glycyl lysine isopeptide (Lys-Gly) (interchain with G-Cter in ubiquitin)" evidence="1">
    <location>
        <position position="48"/>
    </location>
</feature>
<feature type="cross-link" description="Glycyl lysine isopeptide (Lys-Gly) (interchain with G-Cter in ubiquitin)">
    <location>
        <position position="63"/>
    </location>
</feature>
<feature type="cross-link" description="Glycyl lysine isopeptide (Gly-Lys) (interchain with K-? in acceptor proteins)" evidence="2">
    <location>
        <position position="76"/>
    </location>
</feature>
<feature type="sequence conflict" description="In Ref. 1; AAA03351 and 2; AAA56880." evidence="5" ref="1 2">
    <original>E</original>
    <variation>D</variation>
    <location>
        <position position="115"/>
    </location>
</feature>